<comment type="function">
    <text evidence="1">Catalyzes the formation of S-adenosylmethionine (AdoMet) from methionine and ATP. The overall synthetic reaction is composed of two sequential steps, AdoMet formation and the subsequent tripolyphosphate hydrolysis which occurs prior to release of AdoMet from the enzyme.</text>
</comment>
<comment type="catalytic activity">
    <reaction evidence="1">
        <text>L-methionine + ATP + H2O = S-adenosyl-L-methionine + phosphate + diphosphate</text>
        <dbReference type="Rhea" id="RHEA:21080"/>
        <dbReference type="ChEBI" id="CHEBI:15377"/>
        <dbReference type="ChEBI" id="CHEBI:30616"/>
        <dbReference type="ChEBI" id="CHEBI:33019"/>
        <dbReference type="ChEBI" id="CHEBI:43474"/>
        <dbReference type="ChEBI" id="CHEBI:57844"/>
        <dbReference type="ChEBI" id="CHEBI:59789"/>
        <dbReference type="EC" id="2.5.1.6"/>
    </reaction>
</comment>
<comment type="cofactor">
    <cofactor evidence="1">
        <name>Mg(2+)</name>
        <dbReference type="ChEBI" id="CHEBI:18420"/>
    </cofactor>
    <text evidence="1">Binds 2 divalent ions per subunit.</text>
</comment>
<comment type="cofactor">
    <cofactor evidence="1">
        <name>K(+)</name>
        <dbReference type="ChEBI" id="CHEBI:29103"/>
    </cofactor>
    <text evidence="1">Binds 1 potassium ion per subunit.</text>
</comment>
<comment type="pathway">
    <text evidence="1">Amino-acid biosynthesis; S-adenosyl-L-methionine biosynthesis; S-adenosyl-L-methionine from L-methionine: step 1/1.</text>
</comment>
<comment type="subunit">
    <text evidence="1">Homotetramer; dimer of dimers.</text>
</comment>
<comment type="subcellular location">
    <subcellularLocation>
        <location evidence="1">Cytoplasm</location>
    </subcellularLocation>
</comment>
<comment type="similarity">
    <text evidence="1">Belongs to the AdoMet synthase family.</text>
</comment>
<keyword id="KW-0067">ATP-binding</keyword>
<keyword id="KW-0963">Cytoplasm</keyword>
<keyword id="KW-0460">Magnesium</keyword>
<keyword id="KW-0479">Metal-binding</keyword>
<keyword id="KW-0547">Nucleotide-binding</keyword>
<keyword id="KW-0554">One-carbon metabolism</keyword>
<keyword id="KW-0630">Potassium</keyword>
<keyword id="KW-1185">Reference proteome</keyword>
<keyword id="KW-0808">Transferase</keyword>
<dbReference type="EC" id="2.5.1.6" evidence="1"/>
<dbReference type="EMBL" id="AM743169">
    <property type="protein sequence ID" value="CAQ44356.1"/>
    <property type="molecule type" value="Genomic_DNA"/>
</dbReference>
<dbReference type="RefSeq" id="WP_005408103.1">
    <property type="nucleotide sequence ID" value="NC_010943.1"/>
</dbReference>
<dbReference type="SMR" id="B2FPC7"/>
<dbReference type="EnsemblBacteria" id="CAQ44356">
    <property type="protein sequence ID" value="CAQ44356"/>
    <property type="gene ID" value="Smlt0780"/>
</dbReference>
<dbReference type="GeneID" id="97259817"/>
<dbReference type="KEGG" id="sml:Smlt0780"/>
<dbReference type="eggNOG" id="COG0192">
    <property type="taxonomic scope" value="Bacteria"/>
</dbReference>
<dbReference type="HOGENOM" id="CLU_041802_1_1_6"/>
<dbReference type="UniPathway" id="UPA00315">
    <property type="reaction ID" value="UER00080"/>
</dbReference>
<dbReference type="Proteomes" id="UP000008840">
    <property type="component" value="Chromosome"/>
</dbReference>
<dbReference type="GO" id="GO:0005737">
    <property type="term" value="C:cytoplasm"/>
    <property type="evidence" value="ECO:0007669"/>
    <property type="project" value="UniProtKB-SubCell"/>
</dbReference>
<dbReference type="GO" id="GO:0005524">
    <property type="term" value="F:ATP binding"/>
    <property type="evidence" value="ECO:0007669"/>
    <property type="project" value="UniProtKB-UniRule"/>
</dbReference>
<dbReference type="GO" id="GO:0000287">
    <property type="term" value="F:magnesium ion binding"/>
    <property type="evidence" value="ECO:0007669"/>
    <property type="project" value="UniProtKB-UniRule"/>
</dbReference>
<dbReference type="GO" id="GO:0004478">
    <property type="term" value="F:methionine adenosyltransferase activity"/>
    <property type="evidence" value="ECO:0007669"/>
    <property type="project" value="UniProtKB-UniRule"/>
</dbReference>
<dbReference type="GO" id="GO:0006730">
    <property type="term" value="P:one-carbon metabolic process"/>
    <property type="evidence" value="ECO:0007669"/>
    <property type="project" value="UniProtKB-KW"/>
</dbReference>
<dbReference type="GO" id="GO:0006556">
    <property type="term" value="P:S-adenosylmethionine biosynthetic process"/>
    <property type="evidence" value="ECO:0007669"/>
    <property type="project" value="UniProtKB-UniRule"/>
</dbReference>
<dbReference type="CDD" id="cd18079">
    <property type="entry name" value="S-AdoMet_synt"/>
    <property type="match status" value="1"/>
</dbReference>
<dbReference type="FunFam" id="3.30.300.10:FF:000003">
    <property type="entry name" value="S-adenosylmethionine synthase"/>
    <property type="match status" value="1"/>
</dbReference>
<dbReference type="FunFam" id="3.30.300.10:FF:000004">
    <property type="entry name" value="S-adenosylmethionine synthase"/>
    <property type="match status" value="1"/>
</dbReference>
<dbReference type="Gene3D" id="3.30.300.10">
    <property type="match status" value="3"/>
</dbReference>
<dbReference type="HAMAP" id="MF_00086">
    <property type="entry name" value="S_AdoMet_synth1"/>
    <property type="match status" value="1"/>
</dbReference>
<dbReference type="InterPro" id="IPR022631">
    <property type="entry name" value="ADOMET_SYNTHASE_CS"/>
</dbReference>
<dbReference type="InterPro" id="IPR022630">
    <property type="entry name" value="S-AdoMet_synt_C"/>
</dbReference>
<dbReference type="InterPro" id="IPR022629">
    <property type="entry name" value="S-AdoMet_synt_central"/>
</dbReference>
<dbReference type="InterPro" id="IPR022628">
    <property type="entry name" value="S-AdoMet_synt_N"/>
</dbReference>
<dbReference type="InterPro" id="IPR002133">
    <property type="entry name" value="S-AdoMet_synthetase"/>
</dbReference>
<dbReference type="InterPro" id="IPR022636">
    <property type="entry name" value="S-AdoMet_synthetase_sfam"/>
</dbReference>
<dbReference type="NCBIfam" id="TIGR01034">
    <property type="entry name" value="metK"/>
    <property type="match status" value="1"/>
</dbReference>
<dbReference type="PANTHER" id="PTHR11964">
    <property type="entry name" value="S-ADENOSYLMETHIONINE SYNTHETASE"/>
    <property type="match status" value="1"/>
</dbReference>
<dbReference type="Pfam" id="PF02773">
    <property type="entry name" value="S-AdoMet_synt_C"/>
    <property type="match status" value="1"/>
</dbReference>
<dbReference type="Pfam" id="PF02772">
    <property type="entry name" value="S-AdoMet_synt_M"/>
    <property type="match status" value="1"/>
</dbReference>
<dbReference type="Pfam" id="PF00438">
    <property type="entry name" value="S-AdoMet_synt_N"/>
    <property type="match status" value="1"/>
</dbReference>
<dbReference type="PIRSF" id="PIRSF000497">
    <property type="entry name" value="MAT"/>
    <property type="match status" value="1"/>
</dbReference>
<dbReference type="SUPFAM" id="SSF55973">
    <property type="entry name" value="S-adenosylmethionine synthetase"/>
    <property type="match status" value="3"/>
</dbReference>
<dbReference type="PROSITE" id="PS00376">
    <property type="entry name" value="ADOMET_SYNTHASE_1"/>
    <property type="match status" value="1"/>
</dbReference>
<dbReference type="PROSITE" id="PS00377">
    <property type="entry name" value="ADOMET_SYNTHASE_2"/>
    <property type="match status" value="1"/>
</dbReference>
<sequence>MSSYLFTSESVSEGHPDKVADQISDAVLDAILTQDQRARVACETMVKTGVAIVAGEITTSAWIDLEALTRKVITDIGYDSSDVGFDGATCGVLNLIGKQSPHIAQGVDRKKPEEMGAGDQGLMFGYATNETDSYMPAAIHLSHRLVEQQAKIRKKKNSPLSWLRPDAKSQVTLRYENGVVSAIDAVVLSTQHAPGIKQKDLIEAVREEIIKPVLPAKWLHKGTKFHINPTGKFEIGGPVGDCGLTGRKIIVDTYGGWARHGGGAFSGKDPSKVDRSAAYAARYVAKNVVAAGLADRCEVQVSYAIGVAEPTSISVTTFGTGKISDDKIEKLIRKHFDLRPYGIIKMLDLIHPMYQQTAAYGHFGRKPKEFSYLNGEGETVNATAFSWEKTDRAAALRADAKLK</sequence>
<gene>
    <name evidence="1" type="primary">metK</name>
    <name type="ordered locus">Smlt0780</name>
</gene>
<protein>
    <recommendedName>
        <fullName evidence="1">S-adenosylmethionine synthase</fullName>
        <shortName evidence="1">AdoMet synthase</shortName>
        <ecNumber evidence="1">2.5.1.6</ecNumber>
    </recommendedName>
    <alternativeName>
        <fullName evidence="1">MAT</fullName>
    </alternativeName>
    <alternativeName>
        <fullName evidence="1">Methionine adenosyltransferase</fullName>
    </alternativeName>
</protein>
<name>METK_STRMK</name>
<reference key="1">
    <citation type="journal article" date="2008" name="Genome Biol.">
        <title>The complete genome, comparative and functional analysis of Stenotrophomonas maltophilia reveals an organism heavily shielded by drug resistance determinants.</title>
        <authorList>
            <person name="Crossman L.C."/>
            <person name="Gould V.C."/>
            <person name="Dow J.M."/>
            <person name="Vernikos G.S."/>
            <person name="Okazaki A."/>
            <person name="Sebaihia M."/>
            <person name="Saunders D."/>
            <person name="Arrowsmith C."/>
            <person name="Carver T."/>
            <person name="Peters N."/>
            <person name="Adlem E."/>
            <person name="Kerhornou A."/>
            <person name="Lord A."/>
            <person name="Murphy L."/>
            <person name="Seeger K."/>
            <person name="Squares R."/>
            <person name="Rutter S."/>
            <person name="Quail M.A."/>
            <person name="Rajandream M.A."/>
            <person name="Harris D."/>
            <person name="Churcher C."/>
            <person name="Bentley S.D."/>
            <person name="Parkhill J."/>
            <person name="Thomson N.R."/>
            <person name="Avison M.B."/>
        </authorList>
    </citation>
    <scope>NUCLEOTIDE SEQUENCE [LARGE SCALE GENOMIC DNA]</scope>
    <source>
        <strain>K279a</strain>
    </source>
</reference>
<accession>B2FPC7</accession>
<organism>
    <name type="scientific">Stenotrophomonas maltophilia (strain K279a)</name>
    <dbReference type="NCBI Taxonomy" id="522373"/>
    <lineage>
        <taxon>Bacteria</taxon>
        <taxon>Pseudomonadati</taxon>
        <taxon>Pseudomonadota</taxon>
        <taxon>Gammaproteobacteria</taxon>
        <taxon>Lysobacterales</taxon>
        <taxon>Lysobacteraceae</taxon>
        <taxon>Stenotrophomonas</taxon>
        <taxon>Stenotrophomonas maltophilia group</taxon>
    </lineage>
</organism>
<proteinExistence type="inferred from homology"/>
<evidence type="ECO:0000255" key="1">
    <source>
        <dbReference type="HAMAP-Rule" id="MF_00086"/>
    </source>
</evidence>
<feature type="chain" id="PRO_1000093090" description="S-adenosylmethionine synthase">
    <location>
        <begin position="1"/>
        <end position="403"/>
    </location>
</feature>
<feature type="region of interest" description="Flexible loop" evidence="1">
    <location>
        <begin position="99"/>
        <end position="109"/>
    </location>
</feature>
<feature type="binding site" description="in other chain" evidence="1">
    <location>
        <position position="15"/>
    </location>
    <ligand>
        <name>ATP</name>
        <dbReference type="ChEBI" id="CHEBI:30616"/>
        <note>ligand shared between two neighboring subunits</note>
    </ligand>
</feature>
<feature type="binding site" evidence="1">
    <location>
        <position position="17"/>
    </location>
    <ligand>
        <name>Mg(2+)</name>
        <dbReference type="ChEBI" id="CHEBI:18420"/>
    </ligand>
</feature>
<feature type="binding site" evidence="1">
    <location>
        <position position="43"/>
    </location>
    <ligand>
        <name>K(+)</name>
        <dbReference type="ChEBI" id="CHEBI:29103"/>
    </ligand>
</feature>
<feature type="binding site" description="in other chain" evidence="1">
    <location>
        <position position="56"/>
    </location>
    <ligand>
        <name>L-methionine</name>
        <dbReference type="ChEBI" id="CHEBI:57844"/>
        <note>ligand shared between two neighboring subunits</note>
    </ligand>
</feature>
<feature type="binding site" description="in other chain" evidence="1">
    <location>
        <position position="99"/>
    </location>
    <ligand>
        <name>L-methionine</name>
        <dbReference type="ChEBI" id="CHEBI:57844"/>
        <note>ligand shared between two neighboring subunits</note>
    </ligand>
</feature>
<feature type="binding site" description="in other chain" evidence="1">
    <location>
        <begin position="166"/>
        <end position="168"/>
    </location>
    <ligand>
        <name>ATP</name>
        <dbReference type="ChEBI" id="CHEBI:30616"/>
        <note>ligand shared between two neighboring subunits</note>
    </ligand>
</feature>
<feature type="binding site" description="in other chain" evidence="1">
    <location>
        <begin position="232"/>
        <end position="233"/>
    </location>
    <ligand>
        <name>ATP</name>
        <dbReference type="ChEBI" id="CHEBI:30616"/>
        <note>ligand shared between two neighboring subunits</note>
    </ligand>
</feature>
<feature type="binding site" evidence="1">
    <location>
        <position position="241"/>
    </location>
    <ligand>
        <name>ATP</name>
        <dbReference type="ChEBI" id="CHEBI:30616"/>
        <note>ligand shared between two neighboring subunits</note>
    </ligand>
</feature>
<feature type="binding site" evidence="1">
    <location>
        <position position="241"/>
    </location>
    <ligand>
        <name>L-methionine</name>
        <dbReference type="ChEBI" id="CHEBI:57844"/>
        <note>ligand shared between two neighboring subunits</note>
    </ligand>
</feature>
<feature type="binding site" description="in other chain" evidence="1">
    <location>
        <begin position="247"/>
        <end position="248"/>
    </location>
    <ligand>
        <name>ATP</name>
        <dbReference type="ChEBI" id="CHEBI:30616"/>
        <note>ligand shared between two neighboring subunits</note>
    </ligand>
</feature>
<feature type="binding site" evidence="1">
    <location>
        <position position="264"/>
    </location>
    <ligand>
        <name>ATP</name>
        <dbReference type="ChEBI" id="CHEBI:30616"/>
        <note>ligand shared between two neighboring subunits</note>
    </ligand>
</feature>
<feature type="binding site" evidence="1">
    <location>
        <position position="268"/>
    </location>
    <ligand>
        <name>ATP</name>
        <dbReference type="ChEBI" id="CHEBI:30616"/>
        <note>ligand shared between two neighboring subunits</note>
    </ligand>
</feature>
<feature type="binding site" description="in other chain" evidence="1">
    <location>
        <position position="272"/>
    </location>
    <ligand>
        <name>L-methionine</name>
        <dbReference type="ChEBI" id="CHEBI:57844"/>
        <note>ligand shared between two neighboring subunits</note>
    </ligand>
</feature>